<feature type="initiator methionine" description="Removed" evidence="1">
    <location>
        <position position="1"/>
    </location>
</feature>
<feature type="chain" id="PRO_0000170903" description="Endonuclease 8 1">
    <location>
        <begin position="2"/>
        <end position="268"/>
    </location>
</feature>
<feature type="zinc finger region" description="FPG-type" evidence="2">
    <location>
        <begin position="234"/>
        <end position="268"/>
    </location>
</feature>
<feature type="active site" description="Schiff-base intermediate with DNA" evidence="1">
    <location>
        <position position="2"/>
    </location>
</feature>
<feature type="active site" description="Proton donor" evidence="1">
    <location>
        <position position="3"/>
    </location>
</feature>
<feature type="active site" description="Proton donor; for beta-elimination activity" evidence="1">
    <location>
        <position position="52"/>
    </location>
</feature>
<feature type="active site" description="Proton donor; for delta-elimination activity" evidence="1">
    <location>
        <position position="258"/>
    </location>
</feature>
<feature type="binding site" evidence="1">
    <location>
        <position position="125"/>
    </location>
    <ligand>
        <name>DNA</name>
        <dbReference type="ChEBI" id="CHEBI:16991"/>
    </ligand>
</feature>
<feature type="binding site" evidence="1">
    <location>
        <position position="166"/>
    </location>
    <ligand>
        <name>DNA</name>
        <dbReference type="ChEBI" id="CHEBI:16991"/>
    </ligand>
</feature>
<sequence>MPEGHTLHRLARLHQRRFAGAPVSVSSPQGRFADSASALNGRVLRRASAWGKHLFHHYVGGPVVHVHLGLYGTFTEWARPTDGWLPEPAGQVRMRMVGAEFGTDLRGPTVCESIDDGEVADVVARLGPDPLRSDANPSSAWSRITKSRRPIGALLMDQTVIAGVGNVYRNELLFRHRIDPQRPGRGIGEPEFDAAWNDLVSLMKVGLRRGKIIVVRPEHDHGLPSYLPDRPRTYVYRRAGEPCRVCGGVIRTALLEGRNVFWCPVCQT</sequence>
<comment type="function">
    <text evidence="3 5">Involved in base excision repair of DNA damaged by oxidation or by mutagenic agents. DNA glycosylase that recognizes and removes damaged pyrimidines. Excises Tg:A (thymine glycol, prefers 5R isomers), Tg:G, 5,6-dihydrouracil:G base pairs and urea:A, also excises oxidized purine derivatives guanidinohydantoin:C and spiroiminodihydantoin:C. Poorly cleaves dsDNA with uracil substitutions, thus also acting as a weak uracil-DNA glycosylase. Acts on DNA bubble and 3'-fork structures, suggesting a role in replication-associated DNA repair. Activity on 7,8-dihydro-8-oxoguanine (8-oxoG) is debated; a report shows weak activity (PubMed:18457574), whereas another shows none (PubMed:20031487). Has AP (apurinic/apyrimidinic) activity and introduces nicks in dsDNA strand, inefficiently cleaves ssDNA with AP sites and uracil. Probably cleaves the DNA backbone by beta-delta elimination to generate a single-strand break at the site of the removed base with both 3'- and 5'-phosphates. Cleaves ssDNA containing an AP site. Complements an E.coli fpg mutY but not nei nth double mutant (PubMed:18457574).</text>
</comment>
<comment type="catalytic activity">
    <reaction>
        <text>2'-deoxyribonucleotide-(2'-deoxyribose 5'-phosphate)-2'-deoxyribonucleotide-DNA = a 3'-end 2'-deoxyribonucleotide-(2,3-dehydro-2,3-deoxyribose 5'-phosphate)-DNA + a 5'-end 5'-phospho-2'-deoxyribonucleoside-DNA + H(+)</text>
        <dbReference type="Rhea" id="RHEA:66592"/>
        <dbReference type="Rhea" id="RHEA-COMP:13180"/>
        <dbReference type="Rhea" id="RHEA-COMP:16897"/>
        <dbReference type="Rhea" id="RHEA-COMP:17067"/>
        <dbReference type="ChEBI" id="CHEBI:15378"/>
        <dbReference type="ChEBI" id="CHEBI:136412"/>
        <dbReference type="ChEBI" id="CHEBI:157695"/>
        <dbReference type="ChEBI" id="CHEBI:167181"/>
        <dbReference type="EC" id="4.2.99.18"/>
    </reaction>
</comment>
<comment type="cofactor">
    <cofactor evidence="2">
        <name>Zn(2+)</name>
        <dbReference type="ChEBI" id="CHEBI:29105"/>
    </cofactor>
    <text evidence="2">Binds 1 zinc ion per subunit.</text>
</comment>
<comment type="induction">
    <text evidence="4">Expressed in mid-log phase.</text>
</comment>
<comment type="similarity">
    <text evidence="6">Belongs to the FPG family.</text>
</comment>
<comment type="caution">
    <text evidence="6">There are 2 paralogs in M.tuberculosis, in some references this gene is called nei2 (PubMed:18457574, PubMed:19496823).</text>
</comment>
<dbReference type="EC" id="3.2.2.-"/>
<dbReference type="EC" id="4.2.99.18"/>
<dbReference type="EMBL" id="AL123456">
    <property type="protein sequence ID" value="CCP45257.1"/>
    <property type="molecule type" value="Genomic_DNA"/>
</dbReference>
<dbReference type="PIR" id="G70865">
    <property type="entry name" value="G70865"/>
</dbReference>
<dbReference type="RefSeq" id="NP_216980.1">
    <property type="nucleotide sequence ID" value="NC_000962.3"/>
</dbReference>
<dbReference type="RefSeq" id="WP_003412657.1">
    <property type="nucleotide sequence ID" value="NZ_NVQJ01000024.1"/>
</dbReference>
<dbReference type="SMR" id="P9WNB9"/>
<dbReference type="FunCoup" id="P9WNB9">
    <property type="interactions" value="2"/>
</dbReference>
<dbReference type="STRING" id="83332.Rv2464c"/>
<dbReference type="PaxDb" id="83332-Rv2464c"/>
<dbReference type="DNASU" id="888500"/>
<dbReference type="GeneID" id="888500"/>
<dbReference type="KEGG" id="mtu:Rv2464c"/>
<dbReference type="KEGG" id="mtv:RVBD_2464c"/>
<dbReference type="TubercuList" id="Rv2464c"/>
<dbReference type="eggNOG" id="COG0266">
    <property type="taxonomic scope" value="Bacteria"/>
</dbReference>
<dbReference type="InParanoid" id="P9WNB9"/>
<dbReference type="OrthoDB" id="9800855at2"/>
<dbReference type="PhylomeDB" id="P9WNB9"/>
<dbReference type="Proteomes" id="UP000001584">
    <property type="component" value="Chromosome"/>
</dbReference>
<dbReference type="GO" id="GO:0140078">
    <property type="term" value="F:class I DNA-(apurinic or apyrimidinic site) endonuclease activity"/>
    <property type="evidence" value="ECO:0007669"/>
    <property type="project" value="UniProtKB-EC"/>
</dbReference>
<dbReference type="GO" id="GO:0003684">
    <property type="term" value="F:damaged DNA binding"/>
    <property type="evidence" value="ECO:0007669"/>
    <property type="project" value="InterPro"/>
</dbReference>
<dbReference type="GO" id="GO:0003906">
    <property type="term" value="F:DNA-(apurinic or apyrimidinic site) endonuclease activity"/>
    <property type="evidence" value="ECO:0000314"/>
    <property type="project" value="MTBBASE"/>
</dbReference>
<dbReference type="GO" id="GO:0003690">
    <property type="term" value="F:double-stranded DNA binding"/>
    <property type="evidence" value="ECO:0000314"/>
    <property type="project" value="MTBBASE"/>
</dbReference>
<dbReference type="GO" id="GO:0008534">
    <property type="term" value="F:oxidized purine nucleobase lesion DNA N-glycosylase activity"/>
    <property type="evidence" value="ECO:0000314"/>
    <property type="project" value="MTBBASE"/>
</dbReference>
<dbReference type="GO" id="GO:0000703">
    <property type="term" value="F:oxidized pyrimidine nucleobase lesion DNA N-glycosylase activity"/>
    <property type="evidence" value="ECO:0000314"/>
    <property type="project" value="MTBBASE"/>
</dbReference>
<dbReference type="GO" id="GO:0003697">
    <property type="term" value="F:single-stranded DNA binding"/>
    <property type="evidence" value="ECO:0000314"/>
    <property type="project" value="MTBBASE"/>
</dbReference>
<dbReference type="GO" id="GO:0004844">
    <property type="term" value="F:uracil DNA N-glycosylase activity"/>
    <property type="evidence" value="ECO:0000314"/>
    <property type="project" value="MTBBASE"/>
</dbReference>
<dbReference type="GO" id="GO:0008270">
    <property type="term" value="F:zinc ion binding"/>
    <property type="evidence" value="ECO:0007669"/>
    <property type="project" value="UniProtKB-KW"/>
</dbReference>
<dbReference type="GO" id="GO:0006284">
    <property type="term" value="P:base-excision repair"/>
    <property type="evidence" value="ECO:0000318"/>
    <property type="project" value="GO_Central"/>
</dbReference>
<dbReference type="GO" id="GO:0034599">
    <property type="term" value="P:cellular response to oxidative stress"/>
    <property type="evidence" value="ECO:0000315"/>
    <property type="project" value="MTBBASE"/>
</dbReference>
<dbReference type="GO" id="GO:0006281">
    <property type="term" value="P:DNA repair"/>
    <property type="evidence" value="ECO:0000314"/>
    <property type="project" value="MTBBASE"/>
</dbReference>
<dbReference type="GO" id="GO:0006289">
    <property type="term" value="P:nucleotide-excision repair"/>
    <property type="evidence" value="ECO:0000315"/>
    <property type="project" value="MTBBASE"/>
</dbReference>
<dbReference type="GO" id="GO:0006979">
    <property type="term" value="P:response to oxidative stress"/>
    <property type="evidence" value="ECO:0000314"/>
    <property type="project" value="MTBBASE"/>
</dbReference>
<dbReference type="CDD" id="cd08970">
    <property type="entry name" value="AcNei1_N"/>
    <property type="match status" value="1"/>
</dbReference>
<dbReference type="FunFam" id="3.20.190.10:FF:000007">
    <property type="entry name" value="DNA glycosylase"/>
    <property type="match status" value="1"/>
</dbReference>
<dbReference type="FunFam" id="1.10.8.50:FF:000003">
    <property type="entry name" value="Formamidopyrimidine-DNA glycosylase"/>
    <property type="match status" value="1"/>
</dbReference>
<dbReference type="Gene3D" id="1.10.8.50">
    <property type="match status" value="1"/>
</dbReference>
<dbReference type="Gene3D" id="3.20.190.10">
    <property type="entry name" value="MutM-like, N-terminal"/>
    <property type="match status" value="1"/>
</dbReference>
<dbReference type="InterPro" id="IPR015886">
    <property type="entry name" value="DNA_glyclase/AP_lyase_DNA-bd"/>
</dbReference>
<dbReference type="InterPro" id="IPR015887">
    <property type="entry name" value="DNA_glyclase_Znf_dom_DNA_BS"/>
</dbReference>
<dbReference type="InterPro" id="IPR012319">
    <property type="entry name" value="FPG_cat"/>
</dbReference>
<dbReference type="InterPro" id="IPR035937">
    <property type="entry name" value="MutM-like_N-ter"/>
</dbReference>
<dbReference type="InterPro" id="IPR010979">
    <property type="entry name" value="Ribosomal_uS13-like_H2TH"/>
</dbReference>
<dbReference type="InterPro" id="IPR000214">
    <property type="entry name" value="Znf_DNA_glyclase/AP_lyase"/>
</dbReference>
<dbReference type="InterPro" id="IPR010663">
    <property type="entry name" value="Znf_FPG/IleRS"/>
</dbReference>
<dbReference type="PANTHER" id="PTHR42697">
    <property type="entry name" value="ENDONUCLEASE 8"/>
    <property type="match status" value="1"/>
</dbReference>
<dbReference type="PANTHER" id="PTHR42697:SF3">
    <property type="entry name" value="ENDONUCLEASE 8 1"/>
    <property type="match status" value="1"/>
</dbReference>
<dbReference type="Pfam" id="PF01149">
    <property type="entry name" value="Fapy_DNA_glyco"/>
    <property type="match status" value="1"/>
</dbReference>
<dbReference type="Pfam" id="PF06831">
    <property type="entry name" value="H2TH"/>
    <property type="match status" value="1"/>
</dbReference>
<dbReference type="Pfam" id="PF06827">
    <property type="entry name" value="zf-FPG_IleRS"/>
    <property type="match status" value="1"/>
</dbReference>
<dbReference type="SMART" id="SM00898">
    <property type="entry name" value="Fapy_DNA_glyco"/>
    <property type="match status" value="1"/>
</dbReference>
<dbReference type="SMART" id="SM01232">
    <property type="entry name" value="H2TH"/>
    <property type="match status" value="1"/>
</dbReference>
<dbReference type="SUPFAM" id="SSF57716">
    <property type="entry name" value="Glucocorticoid receptor-like (DNA-binding domain)"/>
    <property type="match status" value="1"/>
</dbReference>
<dbReference type="SUPFAM" id="SSF81624">
    <property type="entry name" value="N-terminal domain of MutM-like DNA repair proteins"/>
    <property type="match status" value="1"/>
</dbReference>
<dbReference type="SUPFAM" id="SSF46946">
    <property type="entry name" value="S13-like H2TH domain"/>
    <property type="match status" value="1"/>
</dbReference>
<dbReference type="PROSITE" id="PS01242">
    <property type="entry name" value="ZF_FPG_1"/>
    <property type="match status" value="1"/>
</dbReference>
<dbReference type="PROSITE" id="PS51066">
    <property type="entry name" value="ZF_FPG_2"/>
    <property type="match status" value="1"/>
</dbReference>
<keyword id="KW-0227">DNA damage</keyword>
<keyword id="KW-0234">DNA repair</keyword>
<keyword id="KW-0238">DNA-binding</keyword>
<keyword id="KW-0326">Glycosidase</keyword>
<keyword id="KW-0378">Hydrolase</keyword>
<keyword id="KW-0456">Lyase</keyword>
<keyword id="KW-0479">Metal-binding</keyword>
<keyword id="KW-0511">Multifunctional enzyme</keyword>
<keyword id="KW-1185">Reference proteome</keyword>
<keyword id="KW-0862">Zinc</keyword>
<keyword id="KW-0863">Zinc-finger</keyword>
<reference key="1">
    <citation type="journal article" date="1998" name="Nature">
        <title>Deciphering the biology of Mycobacterium tuberculosis from the complete genome sequence.</title>
        <authorList>
            <person name="Cole S.T."/>
            <person name="Brosch R."/>
            <person name="Parkhill J."/>
            <person name="Garnier T."/>
            <person name="Churcher C.M."/>
            <person name="Harris D.E."/>
            <person name="Gordon S.V."/>
            <person name="Eiglmeier K."/>
            <person name="Gas S."/>
            <person name="Barry C.E. III"/>
            <person name="Tekaia F."/>
            <person name="Badcock K."/>
            <person name="Basham D."/>
            <person name="Brown D."/>
            <person name="Chillingworth T."/>
            <person name="Connor R."/>
            <person name="Davies R.M."/>
            <person name="Devlin K."/>
            <person name="Feltwell T."/>
            <person name="Gentles S."/>
            <person name="Hamlin N."/>
            <person name="Holroyd S."/>
            <person name="Hornsby T."/>
            <person name="Jagels K."/>
            <person name="Krogh A."/>
            <person name="McLean J."/>
            <person name="Moule S."/>
            <person name="Murphy L.D."/>
            <person name="Oliver S."/>
            <person name="Osborne J."/>
            <person name="Quail M.A."/>
            <person name="Rajandream M.A."/>
            <person name="Rogers J."/>
            <person name="Rutter S."/>
            <person name="Seeger K."/>
            <person name="Skelton S."/>
            <person name="Squares S."/>
            <person name="Squares R."/>
            <person name="Sulston J.E."/>
            <person name="Taylor K."/>
            <person name="Whitehead S."/>
            <person name="Barrell B.G."/>
        </authorList>
    </citation>
    <scope>NUCLEOTIDE SEQUENCE [LARGE SCALE GENOMIC DNA]</scope>
    <source>
        <strain>ATCC 25618 / H37Rv</strain>
    </source>
</reference>
<reference key="2">
    <citation type="journal article" date="2008" name="Biochemistry (Mosc.)">
        <title>Novel DNA glycosylases from Mycobacterium tuberculosis.</title>
        <authorList>
            <person name="Sidorenko V.S."/>
            <person name="Rot M.A."/>
            <person name="Filipenko M.L."/>
            <person name="Nevinsky G.A."/>
            <person name="Zharkov D.O."/>
        </authorList>
    </citation>
    <scope>FUNCTION</scope>
    <scope>DNA-BINDING</scope>
    <source>
        <strain>36KAZ</strain>
    </source>
</reference>
<reference key="3">
    <citation type="journal article" date="2009" name="FEMS Immunol. Med. Microbiol.">
        <title>Characterization of the major formamidopyrimidine-DNA glycosylase homolog in Mycobacterium tuberculosis and its linkage to variable tandem repeats.</title>
        <authorList>
            <person name="Olsen I."/>
            <person name="Balasingham S.V."/>
            <person name="Davidsen T."/>
            <person name="Debebe E."/>
            <person name="Rodland E.A."/>
            <person name="van Soolingen D."/>
            <person name="Kremer K."/>
            <person name="Alseth I."/>
            <person name="Tonjum T."/>
        </authorList>
    </citation>
    <scope>INDUCTION</scope>
    <source>
        <strain>ATCC 25618 / H37Rv</strain>
    </source>
</reference>
<reference key="4">
    <citation type="journal article" date="2010" name="DNA Repair">
        <title>The oxidative DNA glycosylases of Mycobacterium tuberculosis exhibit different substrate preferences from their Escherichia coli counterparts.</title>
        <authorList>
            <person name="Guo Y."/>
            <person name="Bandaru V."/>
            <person name="Jaruga P."/>
            <person name="Zhao X."/>
            <person name="Burrows C.J."/>
            <person name="Iwai S."/>
            <person name="Dizdaroglu M."/>
            <person name="Bond J.P."/>
            <person name="Wallace S.S."/>
        </authorList>
    </citation>
    <scope>FUNCTION</scope>
    <scope>SUBSTRATES</scope>
    <source>
        <strain>ATCC 25618 / H37Rv</strain>
    </source>
</reference>
<reference key="5">
    <citation type="journal article" date="2011" name="Mol. Cell. Proteomics">
        <title>Proteogenomic analysis of Mycobacterium tuberculosis by high resolution mass spectrometry.</title>
        <authorList>
            <person name="Kelkar D.S."/>
            <person name="Kumar D."/>
            <person name="Kumar P."/>
            <person name="Balakrishnan L."/>
            <person name="Muthusamy B."/>
            <person name="Yadav A.K."/>
            <person name="Shrivastava P."/>
            <person name="Marimuthu A."/>
            <person name="Anand S."/>
            <person name="Sundaram H."/>
            <person name="Kingsbury R."/>
            <person name="Harsha H.C."/>
            <person name="Nair B."/>
            <person name="Prasad T.S."/>
            <person name="Chauhan D.S."/>
            <person name="Katoch K."/>
            <person name="Katoch V.M."/>
            <person name="Kumar P."/>
            <person name="Chaerkady R."/>
            <person name="Ramachandran S."/>
            <person name="Dash D."/>
            <person name="Pandey A."/>
        </authorList>
    </citation>
    <scope>IDENTIFICATION BY MASS SPECTROMETRY [LARGE SCALE ANALYSIS]</scope>
    <source>
        <strain>ATCC 25618 / H37Rv</strain>
    </source>
</reference>
<reference key="6">
    <citation type="journal article" date="2011" name="Tuberculosis">
        <title>Base excision and nucleotide excision repair pathways in mycobacteria.</title>
        <authorList>
            <person name="Kurthkoti K."/>
            <person name="Varshney U."/>
        </authorList>
    </citation>
    <scope>REVIEW</scope>
</reference>
<gene>
    <name type="primary">nei1</name>
    <name type="synonym">nei2</name>
    <name type="ordered locus">Rv2464c</name>
    <name type="ORF">MTV008.20c</name>
</gene>
<accession>P9WNB9</accession>
<accession>L0TCL5</accession>
<accession>O53191</accession>
<accession>P64158</accession>
<evidence type="ECO:0000250" key="1"/>
<evidence type="ECO:0000255" key="2">
    <source>
        <dbReference type="PROSITE-ProRule" id="PRU00391"/>
    </source>
</evidence>
<evidence type="ECO:0000269" key="3">
    <source>
    </source>
</evidence>
<evidence type="ECO:0000269" key="4">
    <source>
    </source>
</evidence>
<evidence type="ECO:0000269" key="5">
    <source>
    </source>
</evidence>
<evidence type="ECO:0000305" key="6"/>
<name>END8A_MYCTU</name>
<proteinExistence type="evidence at protein level"/>
<protein>
    <recommendedName>
        <fullName>Endonuclease 8 1</fullName>
    </recommendedName>
    <alternativeName>
        <fullName>DNA glycosylase/AP lyase Nei 1</fullName>
        <ecNumber>3.2.2.-</ecNumber>
    </alternativeName>
    <alternativeName>
        <fullName>DNA-(apurinic or apyrimidinic site) lyase Nei 1</fullName>
        <ecNumber>4.2.99.18</ecNumber>
    </alternativeName>
    <alternativeName>
        <fullName>Endonuclease VIII 1</fullName>
    </alternativeName>
</protein>
<organism>
    <name type="scientific">Mycobacterium tuberculosis (strain ATCC 25618 / H37Rv)</name>
    <dbReference type="NCBI Taxonomy" id="83332"/>
    <lineage>
        <taxon>Bacteria</taxon>
        <taxon>Bacillati</taxon>
        <taxon>Actinomycetota</taxon>
        <taxon>Actinomycetes</taxon>
        <taxon>Mycobacteriales</taxon>
        <taxon>Mycobacteriaceae</taxon>
        <taxon>Mycobacterium</taxon>
        <taxon>Mycobacterium tuberculosis complex</taxon>
    </lineage>
</organism>